<gene>
    <name evidence="7" type="primary">NSP1</name>
</gene>
<feature type="chain" id="PRO_0000448272" description="Protein NODULATION SIGNALING PATHWAY 1">
    <location>
        <begin position="1"/>
        <end position="542"/>
    </location>
</feature>
<feature type="domain" description="GRAS" evidence="1">
    <location>
        <begin position="145"/>
        <end position="532"/>
    </location>
</feature>
<feature type="region of interest" description="Disordered" evidence="2">
    <location>
        <begin position="73"/>
        <end position="150"/>
    </location>
</feature>
<feature type="region of interest" description="Leucine repeat I (LRI)" evidence="1">
    <location>
        <begin position="152"/>
        <end position="214"/>
    </location>
</feature>
<feature type="region of interest" description="VHIID" evidence="1">
    <location>
        <begin position="233"/>
        <end position="332"/>
    </location>
</feature>
<feature type="region of interest" description="Leucine repeat II (LRII)" evidence="1">
    <location>
        <begin position="333"/>
        <end position="357"/>
    </location>
</feature>
<feature type="region of interest" description="PFYRE" evidence="1">
    <location>
        <begin position="367"/>
        <end position="452"/>
    </location>
</feature>
<feature type="region of interest" description="SAW" evidence="1">
    <location>
        <begin position="455"/>
        <end position="532"/>
    </location>
</feature>
<feature type="short sequence motif" description="VHIID" evidence="1">
    <location>
        <begin position="269"/>
        <end position="273"/>
    </location>
</feature>
<feature type="compositionally biased region" description="Basic and acidic residues" evidence="2">
    <location>
        <begin position="92"/>
        <end position="103"/>
    </location>
</feature>
<feature type="compositionally biased region" description="Low complexity" evidence="2">
    <location>
        <begin position="136"/>
        <end position="148"/>
    </location>
</feature>
<evidence type="ECO:0000255" key="1">
    <source>
        <dbReference type="PROSITE-ProRule" id="PRU01191"/>
    </source>
</evidence>
<evidence type="ECO:0000256" key="2">
    <source>
        <dbReference type="SAM" id="MobiDB-lite"/>
    </source>
</evidence>
<evidence type="ECO:0000269" key="3">
    <source>
    </source>
</evidence>
<evidence type="ECO:0000269" key="4">
    <source>
    </source>
</evidence>
<evidence type="ECO:0000269" key="5">
    <source>
    </source>
</evidence>
<evidence type="ECO:0000269" key="6">
    <source>
    </source>
</evidence>
<evidence type="ECO:0000303" key="7">
    <source>
    </source>
</evidence>
<evidence type="ECO:0000305" key="8"/>
<evidence type="ECO:0000305" key="9">
    <source>
    </source>
</evidence>
<evidence type="ECO:0000305" key="10">
    <source>
    </source>
</evidence>
<protein>
    <recommendedName>
        <fullName evidence="7">Protein NODULATION SIGNALING PATHWAY 1</fullName>
        <shortName evidence="7">LsNSP1</shortName>
    </recommendedName>
</protein>
<proteinExistence type="evidence at transcript level"/>
<keyword id="KW-0536">Nodulation</keyword>
<keyword id="KW-0539">Nucleus</keyword>
<keyword id="KW-0804">Transcription</keyword>
<keyword id="KW-0805">Transcription regulation</keyword>
<sequence length="542" mass="59839">MTMEPNSTTSDHILDWLEGSVSFFPSFLDEPCNNSGYIQEYHLWDQYQTDANTGSSPNATNSTTATIVATSATSTTSLEPCGSNNNQPLSDLPKKRNATDESSLKPPQNKNKRIKTRPMNEPENGDAVRKNKKGGAKANGSNCNSGNSKEGRWAEQLLNPCAAAIAGGNVNRVQHLLYVLHELASPTGDPNHRLAAHGLRALTHHLSSSSSSPTSSGTITFASTEPRFFQKSLLKFYEVSPWFSFPNNIANASILQVLAEEANITSRTLHILDIGVSHGVQWPTLLDALSRRSGGPPSVVRLTVVTAENDQNMETPFSKAPPGYNYYPRLLGYAQSININLQINRIENHSLQTLNAQSISASPDEILIVCAQFRLHHLNHNSPDERSEFLKVLRNMEPRGVILSENNTECCCSGCGNFAAGFTRRVEYLWRFLDSTSSAFKGRESDERRVMEGEAAKALTNQREMNEEKEKWCGRMKEAGFAGEVFGEDAVDGGRALLRKYDSNWEMKVEEKNTSVGLWWKGQPVSFCSLWKLDGNDQGGTS</sequence>
<reference key="1">
    <citation type="journal article" date="2006" name="Plant Physiol.">
        <title>Lotus japonicus nodulation requires two GRAS domain regulators, one of which is functionally conserved in a non-legume.</title>
        <authorList>
            <person name="Heckmann A.B."/>
            <person name="Lombardo F."/>
            <person name="Miwa H."/>
            <person name="Perry J.A."/>
            <person name="Bunnewell S."/>
            <person name="Parniske M."/>
            <person name="Wang T.L."/>
            <person name="Downie J.A."/>
        </authorList>
    </citation>
    <scope>NUCLEOTIDE SEQUENCE [GENOMIC DNA]</scope>
    <scope>FUNCTION</scope>
    <scope>TISSUE SPECIFICITY</scope>
    <scope>INDUCTION</scope>
    <scope>DISRUPTION PHENOTYPE</scope>
    <source>
        <strain>cv. Gifu / B-129</strain>
    </source>
</reference>
<reference key="2">
    <citation type="journal article" date="2010" name="Plant Cell Physiol.">
        <title>Function of GRAS proteins in root nodule symbiosis is retained in homologs of a non-legume, rice.</title>
        <authorList>
            <person name="Yokota K."/>
            <person name="Soyano T."/>
            <person name="Kouchi H."/>
            <person name="Hayashi M."/>
        </authorList>
    </citation>
    <scope>FUNCTION</scope>
</reference>
<reference key="3">
    <citation type="journal article" date="2013" name="Plant Cell Physiol.">
        <title>Down-regulation of NSP2 expression in developmentally young regions of Lotus japonicus roots in response to rhizobial inoculation.</title>
        <authorList>
            <person name="Murakami Y."/>
            <person name="Yokoyama H."/>
            <person name="Fukui R."/>
            <person name="Kawaguchi M."/>
        </authorList>
    </citation>
    <scope>FUNCTION</scope>
    <scope>INDUCTION</scope>
</reference>
<reference key="4">
    <citation type="journal article" date="2013" name="Plant Cell Physiol.">
        <title>CERBERUS and NSP1 of Lotus japonicus are common symbiosis genes that modulate arbuscular mycorrhiza development.</title>
        <authorList>
            <person name="Takeda N."/>
            <person name="Tsuzuki S."/>
            <person name="Suzaki T."/>
            <person name="Parniske M."/>
            <person name="Kawaguchi M."/>
        </authorList>
    </citation>
    <scope>FUNCTION</scope>
    <scope>INDUCTION</scope>
    <scope>DISRUPTION PHENOTYPE</scope>
</reference>
<reference key="5">
    <citation type="journal article" date="2014" name="Plant J.">
        <title>Rhizobial infection does not require cortical expression of upstream common symbiosis genes responsible for the induction of Ca(2+) spiking.</title>
        <authorList>
            <person name="Hayashi T."/>
            <person name="Shimoda Y."/>
            <person name="Sato S."/>
            <person name="Tabata S."/>
            <person name="Imaizumi-Anraku H."/>
            <person name="Hayashi M."/>
        </authorList>
    </citation>
    <scope>FUNCTION</scope>
    <scope>INDUCTION</scope>
    <scope>DISRUPTION PHENOTYPE</scope>
</reference>
<name>NSP1_LOTJA</name>
<accession>A1DQP9</accession>
<accession>A1DR75</accession>
<organism>
    <name type="scientific">Lotus japonicus</name>
    <name type="common">Lotus corniculatus var. japonicus</name>
    <dbReference type="NCBI Taxonomy" id="34305"/>
    <lineage>
        <taxon>Eukaryota</taxon>
        <taxon>Viridiplantae</taxon>
        <taxon>Streptophyta</taxon>
        <taxon>Embryophyta</taxon>
        <taxon>Tracheophyta</taxon>
        <taxon>Spermatophyta</taxon>
        <taxon>Magnoliopsida</taxon>
        <taxon>eudicotyledons</taxon>
        <taxon>Gunneridae</taxon>
        <taxon>Pentapetalae</taxon>
        <taxon>rosids</taxon>
        <taxon>fabids</taxon>
        <taxon>Fabales</taxon>
        <taxon>Fabaceae</taxon>
        <taxon>Papilionoideae</taxon>
        <taxon>50 kb inversion clade</taxon>
        <taxon>NPAAA clade</taxon>
        <taxon>Hologalegina</taxon>
        <taxon>robinioid clade</taxon>
        <taxon>Loteae</taxon>
        <taxon>Lotus</taxon>
    </lineage>
</organism>
<comment type="function">
    <text evidence="3 5 6 9 10">Transcriptional regulator essential for Nod-factor-induced gene expression (Probable) (PubMed:17071642). Acts downstream of calcium spiking and a calcium/calmodulin-dependent protein kinase required for activation of early nodulation gene expression (PubMed:17071642, PubMed:24329948). Acts as a common symbiosis gene that positively contributes to the early steps of the arbuscular mycorrhizal fungus and rhizobial infection processes in roots (PubMed:23926062). Transcription factor involved in the positive regulation of the beta-carotene isomerase D27, which participates in a pathway leading to biosynthesis of strigolactones in roots (PubMed:23926062).</text>
</comment>
<comment type="subcellular location">
    <subcellularLocation>
        <location evidence="8">Nucleus</location>
    </subcellularLocation>
</comment>
<comment type="tissue specificity">
    <text evidence="3">Highly expressed in roots.</text>
</comment>
<comment type="induction">
    <text evidence="3 4 5 6">Induced in roots after inoculation with Mesorhizobium loti (PubMed:17071642, PubMed:23335614, PubMed:24329948). Induced in roots by infection with arbuscular mycorrhizal fungus Rhizophagus irregularis (PubMed:23926062).</text>
</comment>
<comment type="disruption phenotype">
    <text evidence="3 5 6">Roots of knockout plants form few aborted and non-functional nodules under nitrogen limitation when inoculated with Mesorhizobium loti (PubMed:17071642, PubMed:23926062, PubMed:24329948). Low level of arbuscular mycorrhizal (AM) colonization in roots inoculated with the AM fungus Rhizophagus irregularis (PubMed:23926062).</text>
</comment>
<comment type="similarity">
    <text evidence="8">Belongs to the GRAS family.</text>
</comment>
<dbReference type="EMBL" id="EF012819">
    <property type="protein sequence ID" value="ABK35066.1"/>
    <property type="molecule type" value="Genomic_DNA"/>
</dbReference>
<dbReference type="EMBL" id="EF017372">
    <property type="protein sequence ID" value="ABK35067.1"/>
    <property type="molecule type" value="Genomic_DNA"/>
</dbReference>
<dbReference type="SMR" id="A1DQP9"/>
<dbReference type="OrthoDB" id="1908565at2759"/>
<dbReference type="GO" id="GO:0005634">
    <property type="term" value="C:nucleus"/>
    <property type="evidence" value="ECO:0007669"/>
    <property type="project" value="UniProtKB-SubCell"/>
</dbReference>
<dbReference type="GO" id="GO:0009877">
    <property type="term" value="P:nodulation"/>
    <property type="evidence" value="ECO:0007669"/>
    <property type="project" value="UniProtKB-KW"/>
</dbReference>
<dbReference type="InterPro" id="IPR005202">
    <property type="entry name" value="TF_GRAS"/>
</dbReference>
<dbReference type="PANTHER" id="PTHR31636">
    <property type="entry name" value="OSJNBA0084A10.13 PROTEIN-RELATED"/>
    <property type="match status" value="1"/>
</dbReference>
<dbReference type="Pfam" id="PF03514">
    <property type="entry name" value="GRAS"/>
    <property type="match status" value="1"/>
</dbReference>
<dbReference type="PROSITE" id="PS50985">
    <property type="entry name" value="GRAS"/>
    <property type="match status" value="1"/>
</dbReference>